<sequence>MEQTSMGKDSSKTAIAKFVPDDDGVLKHTIKVHQQPTSATEKKGPSMIARSNDLIEEIQIKRRFGEGTKPLFERDDVKVNTVADGESISSKKIKSHKASSPSKGVNGLVKQNSPDVTQKFTKKYGSSENPDFRRHSSYEKDNYHKSNSKSGVHLEGHEGNYRPYFSDPIRERDRLRRLYGSPNERRSRSHSPSSNRRRSSHRSRRGSGSPRSRRYTSRHRRRSNSQDRTSWKHNPEHRTSRRSRTRSPRGNRSRRRSSTSSNEDDEREYRHRHHRSQERSYQNVLPTLPPALTNYPCHYHVAPMLALPGVQHRPFLPMVASVRHLPPQALYGGLAGAMPFIPMPMTAYRPHLGHRYPPPRHKINKKN</sequence>
<evidence type="ECO:0000250" key="1">
    <source>
        <dbReference type="UniProtKB" id="P11596"/>
    </source>
</evidence>
<evidence type="ECO:0000256" key="2">
    <source>
        <dbReference type="SAM" id="MobiDB-lite"/>
    </source>
</evidence>
<evidence type="ECO:0000269" key="3">
    <source>
    </source>
</evidence>
<evidence type="ECO:0000269" key="4">
    <source>
    </source>
</evidence>
<evidence type="ECO:0000303" key="5">
    <source>
    </source>
</evidence>
<evidence type="ECO:0000305" key="6"/>
<keyword id="KW-0025">Alternative splicing</keyword>
<keyword id="KW-0221">Differentiation</keyword>
<keyword id="KW-1185">Reference proteome</keyword>
<keyword id="KW-0726">Sexual differentiation</keyword>
<feature type="chain" id="PRO_0000441317" description="Female-specific protein transformer">
    <location>
        <begin position="1"/>
        <end position="367"/>
    </location>
</feature>
<feature type="region of interest" description="Disordered" evidence="2">
    <location>
        <begin position="86"/>
        <end position="280"/>
    </location>
</feature>
<feature type="compositionally biased region" description="Polar residues" evidence="2">
    <location>
        <begin position="109"/>
        <end position="129"/>
    </location>
</feature>
<feature type="compositionally biased region" description="Basic and acidic residues" evidence="2">
    <location>
        <begin position="130"/>
        <end position="144"/>
    </location>
</feature>
<feature type="compositionally biased region" description="Basic residues" evidence="2">
    <location>
        <begin position="195"/>
        <end position="223"/>
    </location>
</feature>
<feature type="compositionally biased region" description="Basic and acidic residues" evidence="2">
    <location>
        <begin position="229"/>
        <end position="238"/>
    </location>
</feature>
<feature type="compositionally biased region" description="Basic residues" evidence="2">
    <location>
        <begin position="239"/>
        <end position="257"/>
    </location>
</feature>
<feature type="splice variant" id="VSP_059060" description="In isoform 2.">
    <original>MEQTSMGKDSSKTAIAKFVPDDDGVLKHTIKVHQQPTSATEKKGPSMIARSNDLIEEIQIKRRF</original>
    <variation>MNLYIIYLPTNDNN</variation>
    <location>
        <begin position="1"/>
        <end position="64"/>
    </location>
</feature>
<feature type="sequence conflict" description="In Ref. 1; ACY40709." evidence="6" ref="1">
    <original>Q</original>
    <variation>P</variation>
    <location>
        <position position="282"/>
    </location>
</feature>
<comment type="function">
    <text evidence="1 3 4">Sex differentiation protein controlling female somatic sexual differentiation (PubMed:19841093, PubMed:28495751). May act by promoting the formation of a splicing enhancer complex (By similarity).</text>
</comment>
<comment type="alternative products">
    <event type="alternative splicing"/>
    <isoform>
        <id>A0A1I8MUL8-1</id>
        <name>1</name>
        <sequence type="displayed"/>
    </isoform>
    <isoform>
        <id>A0A1I8MUL8-2</id>
        <name>2</name>
        <sequence type="described" ref="VSP_059060"/>
    </isoform>
    <text evidence="3 4">The sexual regulation of tra occurs through a mechanism of sex-specific alternative mRNA splicing. The active state of tra is initially established by maternally provided tra (PubMed:19841093). Once activated, zygotic tra perpetuates its female-promoting function by a positive splicing feedback loop throughout development (PubMed:19841093). The splice forms expressed in males is not translated: splice form expressed in males is regulated by the male determiner protein Mdmd (PubMed:28495751).</text>
</comment>
<gene>
    <name evidence="5" type="primary">tra</name>
</gene>
<name>TRSF_MUSDO</name>
<protein>
    <recommendedName>
        <fullName evidence="5">Female-specific protein transformer</fullName>
        <shortName evidence="5">Md-tra</shortName>
    </recommendedName>
</protein>
<dbReference type="EMBL" id="GU070694">
    <property type="protein sequence ID" value="ACY40709.1"/>
    <property type="molecule type" value="Genomic_DNA"/>
</dbReference>
<dbReference type="RefSeq" id="XP_005190756.1">
    <property type="nucleotide sequence ID" value="XM_005190699.3"/>
</dbReference>
<dbReference type="EnsemblMetazoa" id="MDOA008597-RA">
    <molecule id="A0A1I8MUL8-1"/>
    <property type="protein sequence ID" value="MDOA008597-PA"/>
    <property type="gene ID" value="MDOA008597"/>
</dbReference>
<dbReference type="EnsemblMetazoa" id="MDOA008597-RB">
    <molecule id="A0A1I8MUL8-1"/>
    <property type="protein sequence ID" value="MDOA008597-PB"/>
    <property type="gene ID" value="MDOA008597"/>
</dbReference>
<dbReference type="EnsemblMetazoa" id="MDOA008597-RC">
    <molecule id="A0A1I8MUL8-2"/>
    <property type="protein sequence ID" value="MDOA008597-PC"/>
    <property type="gene ID" value="MDOA008597"/>
</dbReference>
<dbReference type="EnsemblMetazoa" id="MDOA008597-RD">
    <molecule id="A0A1I8MUL8-2"/>
    <property type="protein sequence ID" value="MDOA008597-PD"/>
    <property type="gene ID" value="MDOA008597"/>
</dbReference>
<dbReference type="EnsemblMetazoa" id="MDOA008597-RE">
    <molecule id="A0A1I8MUL8-2"/>
    <property type="protein sequence ID" value="MDOA008597-PE"/>
    <property type="gene ID" value="MDOA008597"/>
</dbReference>
<dbReference type="EnsemblMetazoa" id="MDOA008597-RF">
    <molecule id="A0A1I8MUL8-2"/>
    <property type="protein sequence ID" value="MDOA008597-PF"/>
    <property type="gene ID" value="MDOA008597"/>
</dbReference>
<dbReference type="EnsemblMetazoa" id="MDOA008597-RG">
    <molecule id="A0A1I8MUL8-2"/>
    <property type="protein sequence ID" value="MDOA008597-PG"/>
    <property type="gene ID" value="MDOA008597"/>
</dbReference>
<dbReference type="EnsemblMetazoa" id="MDOA008597-RH">
    <molecule id="A0A1I8MUL8-2"/>
    <property type="protein sequence ID" value="MDOA008597-PH"/>
    <property type="gene ID" value="MDOA008597"/>
</dbReference>
<dbReference type="EnsemblMetazoa" id="MDOA008597-RI">
    <molecule id="A0A1I8MUL8-2"/>
    <property type="protein sequence ID" value="MDOA008597-PI"/>
    <property type="gene ID" value="MDOA008597"/>
</dbReference>
<dbReference type="EnsemblMetazoa" id="MDOA008597-RJ">
    <molecule id="A0A1I8MUL8-2"/>
    <property type="protein sequence ID" value="MDOA008597-PJ"/>
    <property type="gene ID" value="MDOA008597"/>
</dbReference>
<dbReference type="GeneID" id="101888218"/>
<dbReference type="KEGG" id="mde:101888218"/>
<dbReference type="VEuPathDB" id="VectorBase:MDOA008597"/>
<dbReference type="VEuPathDB" id="VectorBase:MDOMA2_017033"/>
<dbReference type="eggNOG" id="ENOG502TD84">
    <property type="taxonomic scope" value="Eukaryota"/>
</dbReference>
<dbReference type="OrthoDB" id="8066210at2759"/>
<dbReference type="Proteomes" id="UP000694905">
    <property type="component" value="Unplaced"/>
</dbReference>
<dbReference type="GO" id="GO:0030154">
    <property type="term" value="P:cell differentiation"/>
    <property type="evidence" value="ECO:0007669"/>
    <property type="project" value="UniProtKB-KW"/>
</dbReference>
<dbReference type="GO" id="GO:0030237">
    <property type="term" value="P:female sex determination"/>
    <property type="evidence" value="ECO:0000314"/>
    <property type="project" value="UniProtKB"/>
</dbReference>
<dbReference type="GO" id="GO:0046660">
    <property type="term" value="P:female sex differentiation"/>
    <property type="evidence" value="ECO:0000314"/>
    <property type="project" value="UniProtKB"/>
</dbReference>
<proteinExistence type="inferred from homology"/>
<reference key="1">
    <citation type="journal article" date="2010" name="Genetics">
        <title>Molecular characterization of the key switch F provides a basis for understanding the rapid divergence of the sex-determining pathway in the housefly.</title>
        <authorList>
            <person name="Hediger M."/>
            <person name="Henggeler C."/>
            <person name="Meier N."/>
            <person name="Perez R."/>
            <person name="Saccone G."/>
            <person name="Bopp D."/>
        </authorList>
    </citation>
    <scope>NUCLEOTIDE SEQUENCE [GENOMIC DNA]</scope>
    <scope>FUNCTION</scope>
    <scope>ALTERNATIVE SPLICING</scope>
</reference>
<reference key="2">
    <citation type="journal article" date="2014" name="Genome Biol.">
        <title>Genome of the house fly, Musca domestica L., a global vector of diseases with adaptations to a septic environment.</title>
        <authorList>
            <person name="Scott J.G."/>
            <person name="Warren W.C."/>
            <person name="Beukeboom L.W."/>
            <person name="Bopp D."/>
            <person name="Clark A.G."/>
            <person name="Giers S.D."/>
            <person name="Hediger M."/>
            <person name="Jones A.K."/>
            <person name="Kasai S."/>
            <person name="Leichter C.A."/>
            <person name="Li M."/>
            <person name="Meisel R.P."/>
            <person name="Minx P."/>
            <person name="Murphy T.D."/>
            <person name="Nelson D.R."/>
            <person name="Reid W.R."/>
            <person name="Rinkevich F.D."/>
            <person name="Robertson H.M."/>
            <person name="Sackton T.B."/>
            <person name="Sattelle D.B."/>
            <person name="Thibaud-Nissen F."/>
            <person name="Tomlinson C."/>
            <person name="van de Zande L."/>
            <person name="Walden K.K."/>
            <person name="Wilson R.K."/>
            <person name="Liu N."/>
        </authorList>
    </citation>
    <scope>NUCLEOTIDE SEQUENCE [LARGE SCALE GENOMIC DNA]</scope>
    <source>
        <strain>aabys</strain>
    </source>
</reference>
<reference key="3">
    <citation type="journal article" date="2017" name="Science">
        <title>Male sex in houseflies is determined by Mdmd, a paralog of the generic splice factor gene CWC22.</title>
        <authorList>
            <person name="Sharma A."/>
            <person name="Heinze S.D."/>
            <person name="Wu Y."/>
            <person name="Kohlbrenner T."/>
            <person name="Morilla I."/>
            <person name="Brunner C."/>
            <person name="Wimmer E.A."/>
            <person name="van de Zande L."/>
            <person name="Robinson M.D."/>
            <person name="Beukeboom L.W."/>
            <person name="Bopp D."/>
        </authorList>
    </citation>
    <scope>FUNCTION</scope>
</reference>
<organism>
    <name type="scientific">Musca domestica</name>
    <name type="common">House fly</name>
    <dbReference type="NCBI Taxonomy" id="7370"/>
    <lineage>
        <taxon>Eukaryota</taxon>
        <taxon>Metazoa</taxon>
        <taxon>Ecdysozoa</taxon>
        <taxon>Arthropoda</taxon>
        <taxon>Hexapoda</taxon>
        <taxon>Insecta</taxon>
        <taxon>Pterygota</taxon>
        <taxon>Neoptera</taxon>
        <taxon>Endopterygota</taxon>
        <taxon>Diptera</taxon>
        <taxon>Brachycera</taxon>
        <taxon>Muscomorpha</taxon>
        <taxon>Muscoidea</taxon>
        <taxon>Muscidae</taxon>
        <taxon>Musca</taxon>
    </lineage>
</organism>
<accession>A0A1I8MUL8</accession>
<accession>A0A1I8MUL9</accession>
<accession>D0VEM0</accession>